<dbReference type="EC" id="3.5.1.88" evidence="1"/>
<dbReference type="EMBL" id="CP000020">
    <property type="protein sequence ID" value="AAW87038.1"/>
    <property type="molecule type" value="Genomic_DNA"/>
</dbReference>
<dbReference type="RefSeq" id="WP_011262885.1">
    <property type="nucleotide sequence ID" value="NZ_CAWLES010000001.1"/>
</dbReference>
<dbReference type="RefSeq" id="YP_205926.1">
    <property type="nucleotide sequence ID" value="NC_006840.2"/>
</dbReference>
<dbReference type="SMR" id="Q5E1Q8"/>
<dbReference type="STRING" id="312309.VF_2543"/>
<dbReference type="EnsemblBacteria" id="AAW87038">
    <property type="protein sequence ID" value="AAW87038"/>
    <property type="gene ID" value="VF_2543"/>
</dbReference>
<dbReference type="GeneID" id="54165293"/>
<dbReference type="KEGG" id="vfi:VF_2543"/>
<dbReference type="PATRIC" id="fig|312309.11.peg.2569"/>
<dbReference type="eggNOG" id="COG0242">
    <property type="taxonomic scope" value="Bacteria"/>
</dbReference>
<dbReference type="HOGENOM" id="CLU_061901_2_1_6"/>
<dbReference type="OrthoDB" id="9804313at2"/>
<dbReference type="Proteomes" id="UP000000537">
    <property type="component" value="Chromosome I"/>
</dbReference>
<dbReference type="GO" id="GO:0046872">
    <property type="term" value="F:metal ion binding"/>
    <property type="evidence" value="ECO:0007669"/>
    <property type="project" value="UniProtKB-KW"/>
</dbReference>
<dbReference type="GO" id="GO:0042586">
    <property type="term" value="F:peptide deformylase activity"/>
    <property type="evidence" value="ECO:0007669"/>
    <property type="project" value="UniProtKB-UniRule"/>
</dbReference>
<dbReference type="GO" id="GO:0043686">
    <property type="term" value="P:co-translational protein modification"/>
    <property type="evidence" value="ECO:0007669"/>
    <property type="project" value="TreeGrafter"/>
</dbReference>
<dbReference type="GO" id="GO:0006412">
    <property type="term" value="P:translation"/>
    <property type="evidence" value="ECO:0007669"/>
    <property type="project" value="UniProtKB-UniRule"/>
</dbReference>
<dbReference type="CDD" id="cd00487">
    <property type="entry name" value="Pep_deformylase"/>
    <property type="match status" value="1"/>
</dbReference>
<dbReference type="FunFam" id="3.90.45.10:FF:000001">
    <property type="entry name" value="Peptide deformylase"/>
    <property type="match status" value="1"/>
</dbReference>
<dbReference type="Gene3D" id="3.90.45.10">
    <property type="entry name" value="Peptide deformylase"/>
    <property type="match status" value="1"/>
</dbReference>
<dbReference type="HAMAP" id="MF_00163">
    <property type="entry name" value="Pep_deformylase"/>
    <property type="match status" value="1"/>
</dbReference>
<dbReference type="InterPro" id="IPR023635">
    <property type="entry name" value="Peptide_deformylase"/>
</dbReference>
<dbReference type="InterPro" id="IPR036821">
    <property type="entry name" value="Peptide_deformylase_sf"/>
</dbReference>
<dbReference type="NCBIfam" id="TIGR00079">
    <property type="entry name" value="pept_deformyl"/>
    <property type="match status" value="1"/>
</dbReference>
<dbReference type="NCBIfam" id="NF001159">
    <property type="entry name" value="PRK00150.1-3"/>
    <property type="match status" value="1"/>
</dbReference>
<dbReference type="PANTHER" id="PTHR10458">
    <property type="entry name" value="PEPTIDE DEFORMYLASE"/>
    <property type="match status" value="1"/>
</dbReference>
<dbReference type="PANTHER" id="PTHR10458:SF21">
    <property type="entry name" value="PEPTIDE DEFORMYLASE"/>
    <property type="match status" value="1"/>
</dbReference>
<dbReference type="Pfam" id="PF01327">
    <property type="entry name" value="Pep_deformylase"/>
    <property type="match status" value="1"/>
</dbReference>
<dbReference type="PIRSF" id="PIRSF004749">
    <property type="entry name" value="Pep_def"/>
    <property type="match status" value="1"/>
</dbReference>
<dbReference type="PRINTS" id="PR01576">
    <property type="entry name" value="PDEFORMYLASE"/>
</dbReference>
<dbReference type="SUPFAM" id="SSF56420">
    <property type="entry name" value="Peptide deformylase"/>
    <property type="match status" value="1"/>
</dbReference>
<organism>
    <name type="scientific">Aliivibrio fischeri (strain ATCC 700601 / ES114)</name>
    <name type="common">Vibrio fischeri</name>
    <dbReference type="NCBI Taxonomy" id="312309"/>
    <lineage>
        <taxon>Bacteria</taxon>
        <taxon>Pseudomonadati</taxon>
        <taxon>Pseudomonadota</taxon>
        <taxon>Gammaproteobacteria</taxon>
        <taxon>Vibrionales</taxon>
        <taxon>Vibrionaceae</taxon>
        <taxon>Aliivibrio</taxon>
    </lineage>
</organism>
<evidence type="ECO:0000255" key="1">
    <source>
        <dbReference type="HAMAP-Rule" id="MF_00163"/>
    </source>
</evidence>
<gene>
    <name evidence="1" type="primary">def</name>
    <name type="ordered locus">VF_2543</name>
</gene>
<comment type="function">
    <text evidence="1">Removes the formyl group from the N-terminal Met of newly synthesized proteins. Requires at least a dipeptide for an efficient rate of reaction. N-terminal L-methionine is a prerequisite for activity but the enzyme has broad specificity at other positions.</text>
</comment>
<comment type="catalytic activity">
    <reaction evidence="1">
        <text>N-terminal N-formyl-L-methionyl-[peptide] + H2O = N-terminal L-methionyl-[peptide] + formate</text>
        <dbReference type="Rhea" id="RHEA:24420"/>
        <dbReference type="Rhea" id="RHEA-COMP:10639"/>
        <dbReference type="Rhea" id="RHEA-COMP:10640"/>
        <dbReference type="ChEBI" id="CHEBI:15377"/>
        <dbReference type="ChEBI" id="CHEBI:15740"/>
        <dbReference type="ChEBI" id="CHEBI:49298"/>
        <dbReference type="ChEBI" id="CHEBI:64731"/>
        <dbReference type="EC" id="3.5.1.88"/>
    </reaction>
</comment>
<comment type="cofactor">
    <cofactor evidence="1">
        <name>Fe(2+)</name>
        <dbReference type="ChEBI" id="CHEBI:29033"/>
    </cofactor>
    <text evidence="1">Binds 1 Fe(2+) ion.</text>
</comment>
<comment type="similarity">
    <text evidence="1">Belongs to the polypeptide deformylase family.</text>
</comment>
<reference key="1">
    <citation type="journal article" date="2005" name="Proc. Natl. Acad. Sci. U.S.A.">
        <title>Complete genome sequence of Vibrio fischeri: a symbiotic bacterium with pathogenic congeners.</title>
        <authorList>
            <person name="Ruby E.G."/>
            <person name="Urbanowski M."/>
            <person name="Campbell J."/>
            <person name="Dunn A."/>
            <person name="Faini M."/>
            <person name="Gunsalus R."/>
            <person name="Lostroh P."/>
            <person name="Lupp C."/>
            <person name="McCann J."/>
            <person name="Millikan D."/>
            <person name="Schaefer A."/>
            <person name="Stabb E."/>
            <person name="Stevens A."/>
            <person name="Visick K."/>
            <person name="Whistler C."/>
            <person name="Greenberg E.P."/>
        </authorList>
    </citation>
    <scope>NUCLEOTIDE SEQUENCE [LARGE SCALE GENOMIC DNA]</scope>
    <source>
        <strain>ATCC 700601 / ES114</strain>
    </source>
</reference>
<proteinExistence type="inferred from homology"/>
<protein>
    <recommendedName>
        <fullName evidence="1">Peptide deformylase</fullName>
        <shortName evidence="1">PDF</shortName>
        <ecNumber evidence="1">3.5.1.88</ecNumber>
    </recommendedName>
    <alternativeName>
        <fullName evidence="1">Polypeptide deformylase</fullName>
    </alternativeName>
</protein>
<accession>Q5E1Q8</accession>
<name>DEF_ALIF1</name>
<sequence length="170" mass="18997">MALLEVLTFPDDRLRTVAKPVEAVTPEIQKFVDDMIETMYDEEGIGLAATQVDFHQRIVVIDVSETRDEPMVLINPVITQKSGDDGIEEGCLSVPGAKGLVPRSAEVSVSALDRDGNEFSFDADDLLAICVQHELDHLDGKLFVDYLSPLKRKRIKEKLEKIKKFNAKNQ</sequence>
<keyword id="KW-0378">Hydrolase</keyword>
<keyword id="KW-0408">Iron</keyword>
<keyword id="KW-0479">Metal-binding</keyword>
<keyword id="KW-0648">Protein biosynthesis</keyword>
<keyword id="KW-1185">Reference proteome</keyword>
<feature type="chain" id="PRO_0000301123" description="Peptide deformylase">
    <location>
        <begin position="1"/>
        <end position="170"/>
    </location>
</feature>
<feature type="active site" evidence="1">
    <location>
        <position position="134"/>
    </location>
</feature>
<feature type="binding site" evidence="1">
    <location>
        <position position="91"/>
    </location>
    <ligand>
        <name>Fe cation</name>
        <dbReference type="ChEBI" id="CHEBI:24875"/>
    </ligand>
</feature>
<feature type="binding site" evidence="1">
    <location>
        <position position="133"/>
    </location>
    <ligand>
        <name>Fe cation</name>
        <dbReference type="ChEBI" id="CHEBI:24875"/>
    </ligand>
</feature>
<feature type="binding site" evidence="1">
    <location>
        <position position="137"/>
    </location>
    <ligand>
        <name>Fe cation</name>
        <dbReference type="ChEBI" id="CHEBI:24875"/>
    </ligand>
</feature>